<reference key="1">
    <citation type="journal article" date="2008" name="DNA Res.">
        <title>Complete genome sequence of Finegoldia magna, an anaerobic opportunistic pathogen.</title>
        <authorList>
            <person name="Goto T."/>
            <person name="Yamashita A."/>
            <person name="Hirakawa H."/>
            <person name="Matsutani M."/>
            <person name="Todo K."/>
            <person name="Ohshima K."/>
            <person name="Toh H."/>
            <person name="Miyamoto K."/>
            <person name="Kuhara S."/>
            <person name="Hattori M."/>
            <person name="Shimizu T."/>
            <person name="Akimoto S."/>
        </authorList>
    </citation>
    <scope>NUCLEOTIDE SEQUENCE [LARGE SCALE GENOMIC DNA]</scope>
    <source>
        <strain>ATCC 29328 / DSM 20472 / WAL 2508</strain>
    </source>
</reference>
<feature type="chain" id="PRO_1000093358" description="Endonuclease MutS2">
    <location>
        <begin position="1"/>
        <end position="783"/>
    </location>
</feature>
<feature type="domain" description="Smr" evidence="1">
    <location>
        <begin position="708"/>
        <end position="783"/>
    </location>
</feature>
<feature type="binding site" evidence="1">
    <location>
        <begin position="333"/>
        <end position="340"/>
    </location>
    <ligand>
        <name>ATP</name>
        <dbReference type="ChEBI" id="CHEBI:30616"/>
    </ligand>
</feature>
<comment type="function">
    <text evidence="1">Endonuclease that is involved in the suppression of homologous recombination and thus may have a key role in the control of bacterial genetic diversity.</text>
</comment>
<comment type="function">
    <text evidence="1">Acts as a ribosome collision sensor, splitting the ribosome into its 2 subunits. Detects stalled/collided 70S ribosomes which it binds and splits by an ATP-hydrolysis driven conformational change. Acts upstream of the ribosome quality control system (RQC), a ribosome-associated complex that mediates the extraction of incompletely synthesized nascent chains from stalled ribosomes and their subsequent degradation. Probably generates substrates for RQC.</text>
</comment>
<comment type="subunit">
    <text evidence="1">Homodimer. Binds to stalled ribosomes, contacting rRNA.</text>
</comment>
<comment type="similarity">
    <text evidence="1">Belongs to the DNA mismatch repair MutS family. MutS2 subfamily.</text>
</comment>
<protein>
    <recommendedName>
        <fullName evidence="1">Endonuclease MutS2</fullName>
        <ecNumber evidence="1">3.1.-.-</ecNumber>
    </recommendedName>
    <alternativeName>
        <fullName evidence="1">Ribosome-associated protein quality control-upstream factor</fullName>
        <shortName evidence="1">RQC-upstream factor</shortName>
        <shortName evidence="1">RqcU</shortName>
        <ecNumber evidence="1">3.6.4.-</ecNumber>
    </alternativeName>
</protein>
<accession>B0S1P2</accession>
<dbReference type="EC" id="3.1.-.-" evidence="1"/>
<dbReference type="EC" id="3.6.4.-" evidence="1"/>
<dbReference type="EMBL" id="AP008971">
    <property type="protein sequence ID" value="BAG08282.1"/>
    <property type="molecule type" value="Genomic_DNA"/>
</dbReference>
<dbReference type="RefSeq" id="WP_012290675.1">
    <property type="nucleotide sequence ID" value="NC_010376.1"/>
</dbReference>
<dbReference type="SMR" id="B0S1P2"/>
<dbReference type="STRING" id="334413.FMG_0864"/>
<dbReference type="KEGG" id="fma:FMG_0864"/>
<dbReference type="eggNOG" id="COG1193">
    <property type="taxonomic scope" value="Bacteria"/>
</dbReference>
<dbReference type="HOGENOM" id="CLU_011252_2_1_9"/>
<dbReference type="Proteomes" id="UP000001319">
    <property type="component" value="Chromosome"/>
</dbReference>
<dbReference type="GO" id="GO:0005524">
    <property type="term" value="F:ATP binding"/>
    <property type="evidence" value="ECO:0007669"/>
    <property type="project" value="UniProtKB-UniRule"/>
</dbReference>
<dbReference type="GO" id="GO:0016887">
    <property type="term" value="F:ATP hydrolysis activity"/>
    <property type="evidence" value="ECO:0007669"/>
    <property type="project" value="InterPro"/>
</dbReference>
<dbReference type="GO" id="GO:0140664">
    <property type="term" value="F:ATP-dependent DNA damage sensor activity"/>
    <property type="evidence" value="ECO:0007669"/>
    <property type="project" value="InterPro"/>
</dbReference>
<dbReference type="GO" id="GO:0004519">
    <property type="term" value="F:endonuclease activity"/>
    <property type="evidence" value="ECO:0007669"/>
    <property type="project" value="UniProtKB-UniRule"/>
</dbReference>
<dbReference type="GO" id="GO:0030983">
    <property type="term" value="F:mismatched DNA binding"/>
    <property type="evidence" value="ECO:0007669"/>
    <property type="project" value="InterPro"/>
</dbReference>
<dbReference type="GO" id="GO:0043023">
    <property type="term" value="F:ribosomal large subunit binding"/>
    <property type="evidence" value="ECO:0007669"/>
    <property type="project" value="UniProtKB-UniRule"/>
</dbReference>
<dbReference type="GO" id="GO:0019843">
    <property type="term" value="F:rRNA binding"/>
    <property type="evidence" value="ECO:0007669"/>
    <property type="project" value="UniProtKB-UniRule"/>
</dbReference>
<dbReference type="GO" id="GO:0006298">
    <property type="term" value="P:mismatch repair"/>
    <property type="evidence" value="ECO:0007669"/>
    <property type="project" value="InterPro"/>
</dbReference>
<dbReference type="GO" id="GO:0045910">
    <property type="term" value="P:negative regulation of DNA recombination"/>
    <property type="evidence" value="ECO:0007669"/>
    <property type="project" value="InterPro"/>
</dbReference>
<dbReference type="GO" id="GO:0072344">
    <property type="term" value="P:rescue of stalled ribosome"/>
    <property type="evidence" value="ECO:0007669"/>
    <property type="project" value="UniProtKB-UniRule"/>
</dbReference>
<dbReference type="CDD" id="cd03280">
    <property type="entry name" value="ABC_MutS2"/>
    <property type="match status" value="1"/>
</dbReference>
<dbReference type="FunFam" id="3.40.50.300:FF:000830">
    <property type="entry name" value="Endonuclease MutS2"/>
    <property type="match status" value="1"/>
</dbReference>
<dbReference type="Gene3D" id="3.30.1370.110">
    <property type="match status" value="1"/>
</dbReference>
<dbReference type="Gene3D" id="3.40.50.300">
    <property type="entry name" value="P-loop containing nucleotide triphosphate hydrolases"/>
    <property type="match status" value="1"/>
</dbReference>
<dbReference type="HAMAP" id="MF_00092">
    <property type="entry name" value="MutS2"/>
    <property type="match status" value="1"/>
</dbReference>
<dbReference type="InterPro" id="IPR000432">
    <property type="entry name" value="DNA_mismatch_repair_MutS_C"/>
</dbReference>
<dbReference type="InterPro" id="IPR007696">
    <property type="entry name" value="DNA_mismatch_repair_MutS_core"/>
</dbReference>
<dbReference type="InterPro" id="IPR036187">
    <property type="entry name" value="DNA_mismatch_repair_MutS_sf"/>
</dbReference>
<dbReference type="InterPro" id="IPR046893">
    <property type="entry name" value="MSSS"/>
</dbReference>
<dbReference type="InterPro" id="IPR045076">
    <property type="entry name" value="MutS"/>
</dbReference>
<dbReference type="InterPro" id="IPR005747">
    <property type="entry name" value="MutS2"/>
</dbReference>
<dbReference type="InterPro" id="IPR027417">
    <property type="entry name" value="P-loop_NTPase"/>
</dbReference>
<dbReference type="InterPro" id="IPR002625">
    <property type="entry name" value="Smr_dom"/>
</dbReference>
<dbReference type="InterPro" id="IPR036063">
    <property type="entry name" value="Smr_dom_sf"/>
</dbReference>
<dbReference type="NCBIfam" id="TIGR01069">
    <property type="entry name" value="mutS2"/>
    <property type="match status" value="1"/>
</dbReference>
<dbReference type="PANTHER" id="PTHR48466:SF2">
    <property type="entry name" value="OS10G0509000 PROTEIN"/>
    <property type="match status" value="1"/>
</dbReference>
<dbReference type="PANTHER" id="PTHR48466">
    <property type="entry name" value="OS10G0509000 PROTEIN-RELATED"/>
    <property type="match status" value="1"/>
</dbReference>
<dbReference type="Pfam" id="PF20297">
    <property type="entry name" value="MSSS"/>
    <property type="match status" value="1"/>
</dbReference>
<dbReference type="Pfam" id="PF00488">
    <property type="entry name" value="MutS_V"/>
    <property type="match status" value="1"/>
</dbReference>
<dbReference type="Pfam" id="PF01713">
    <property type="entry name" value="Smr"/>
    <property type="match status" value="1"/>
</dbReference>
<dbReference type="PIRSF" id="PIRSF005814">
    <property type="entry name" value="MutS_YshD"/>
    <property type="match status" value="1"/>
</dbReference>
<dbReference type="SMART" id="SM00534">
    <property type="entry name" value="MUTSac"/>
    <property type="match status" value="1"/>
</dbReference>
<dbReference type="SMART" id="SM00533">
    <property type="entry name" value="MUTSd"/>
    <property type="match status" value="1"/>
</dbReference>
<dbReference type="SMART" id="SM00463">
    <property type="entry name" value="SMR"/>
    <property type="match status" value="1"/>
</dbReference>
<dbReference type="SUPFAM" id="SSF48334">
    <property type="entry name" value="DNA repair protein MutS, domain III"/>
    <property type="match status" value="1"/>
</dbReference>
<dbReference type="SUPFAM" id="SSF52540">
    <property type="entry name" value="P-loop containing nucleoside triphosphate hydrolases"/>
    <property type="match status" value="1"/>
</dbReference>
<dbReference type="SUPFAM" id="SSF160443">
    <property type="entry name" value="SMR domain-like"/>
    <property type="match status" value="1"/>
</dbReference>
<dbReference type="PROSITE" id="PS00486">
    <property type="entry name" value="DNA_MISMATCH_REPAIR_2"/>
    <property type="match status" value="1"/>
</dbReference>
<dbReference type="PROSITE" id="PS50828">
    <property type="entry name" value="SMR"/>
    <property type="match status" value="1"/>
</dbReference>
<keyword id="KW-0067">ATP-binding</keyword>
<keyword id="KW-0238">DNA-binding</keyword>
<keyword id="KW-0255">Endonuclease</keyword>
<keyword id="KW-0378">Hydrolase</keyword>
<keyword id="KW-0540">Nuclease</keyword>
<keyword id="KW-0547">Nucleotide-binding</keyword>
<keyword id="KW-1185">Reference proteome</keyword>
<keyword id="KW-0694">RNA-binding</keyword>
<keyword id="KW-0699">rRNA-binding</keyword>
<sequence length="783" mass="88979">MDKKTLNTLEYNEIKNKIEKLCKSKLGKSIANKLEPMIEEDEIRQSLDETYEAMSMIYKFSNPPIYEIINVKASIMHVSKGGYIVPEVLLKIGQILNSVHDIKRYAGESDENYENCPMIMAMMDSLVEEPDLVATINNAIISEDEISDNASRNLARIRQTKRQKTENIRDKINSILSSNDQALQENIVTMRDDRYVIPVKVSHKSSFKGIVHDHSSSGQTVYIEPMEVVELNNELRMLEAEEREEIIRILKEISDRVYDVKDSIFVDQDVLSKLDFIFAKAKYAIEIDATNPKLNTNGYFNFKNARHPLLDKKKVVPISIYLGDDYNTLVITGPNTGGKTVTLKTVGLITLMAQSGILIPVDENSEVAIFDNIFTDIGDEQSIEQSLSTFSAHMKNIVHIVNNITFNSLVLFDELGAGTDPTEGAALAIAILRIFLYKSIRTIATTHYSQLKIFALTEKYVKNGSVEFDVNTLSPTYKLRIGIPGKSNAFEISRRLGLDDDIINNAKEILSQEDKDFEDVLSDIESKKKQIDEDKQRQLELKEDLLKLRDRYEKEIEKTKLEKEKIINEAKENANEIYMRAKEESRELINKLKFLEKESDARTVANDVENKFNKRIKKSSNKKLLNETSKKQKLQLGDEVEILGIEQQGTIVSEPDKKGDLLVQVGILKINANVKNLKKIKEKEVIQSSKSIKSIIKNKANSDIKSEIDLRGKNIEEAIYELDKYIDDCVIVGLKKVNIIHGKGTGMLRKGIREYLRSDKRVKKIEDAGYNEGGLGATFIYLK</sequence>
<organism>
    <name type="scientific">Finegoldia magna (strain ATCC 29328 / DSM 20472 / WAL 2508)</name>
    <name type="common">Peptostreptococcus magnus</name>
    <dbReference type="NCBI Taxonomy" id="334413"/>
    <lineage>
        <taxon>Bacteria</taxon>
        <taxon>Bacillati</taxon>
        <taxon>Bacillota</taxon>
        <taxon>Tissierellia</taxon>
        <taxon>Tissierellales</taxon>
        <taxon>Peptoniphilaceae</taxon>
        <taxon>Finegoldia</taxon>
    </lineage>
</organism>
<gene>
    <name evidence="1" type="primary">mutS2</name>
    <name evidence="1" type="synonym">rqcU</name>
    <name type="ordered locus">FMG_0864</name>
</gene>
<evidence type="ECO:0000255" key="1">
    <source>
        <dbReference type="HAMAP-Rule" id="MF_00092"/>
    </source>
</evidence>
<name>MUTS2_FINM2</name>
<proteinExistence type="inferred from homology"/>